<reference key="1">
    <citation type="journal article" date="2002" name="Nat. Biotechnol.">
        <title>Genome sequence of the dissimilatory metal ion-reducing bacterium Shewanella oneidensis.</title>
        <authorList>
            <person name="Heidelberg J.F."/>
            <person name="Paulsen I.T."/>
            <person name="Nelson K.E."/>
            <person name="Gaidos E.J."/>
            <person name="Nelson W.C."/>
            <person name="Read T.D."/>
            <person name="Eisen J.A."/>
            <person name="Seshadri R."/>
            <person name="Ward N.L."/>
            <person name="Methe B.A."/>
            <person name="Clayton R.A."/>
            <person name="Meyer T."/>
            <person name="Tsapin A."/>
            <person name="Scott J."/>
            <person name="Beanan M.J."/>
            <person name="Brinkac L.M."/>
            <person name="Daugherty S.C."/>
            <person name="DeBoy R.T."/>
            <person name="Dodson R.J."/>
            <person name="Durkin A.S."/>
            <person name="Haft D.H."/>
            <person name="Kolonay J.F."/>
            <person name="Madupu R."/>
            <person name="Peterson J.D."/>
            <person name="Umayam L.A."/>
            <person name="White O."/>
            <person name="Wolf A.M."/>
            <person name="Vamathevan J.J."/>
            <person name="Weidman J.F."/>
            <person name="Impraim M."/>
            <person name="Lee K."/>
            <person name="Berry K.J."/>
            <person name="Lee C."/>
            <person name="Mueller J."/>
            <person name="Khouri H.M."/>
            <person name="Gill J."/>
            <person name="Utterback T.R."/>
            <person name="McDonald L.A."/>
            <person name="Feldblyum T.V."/>
            <person name="Smith H.O."/>
            <person name="Venter J.C."/>
            <person name="Nealson K.H."/>
            <person name="Fraser C.M."/>
        </authorList>
    </citation>
    <scope>NUCLEOTIDE SEQUENCE [LARGE SCALE GENOMIC DNA]</scope>
    <source>
        <strain>ATCC 700550 / JCM 31522 / CIP 106686 / LMG 19005 / NCIMB 14063 / MR-1</strain>
    </source>
</reference>
<gene>
    <name evidence="1" type="primary">proQ</name>
    <name type="ordered locus">SO_2602</name>
</gene>
<sequence>MESTDKLTDTNAILAYLYETFPLCFIAEGETKPLKIGLFQDLAERLADDSKVSKTQLRVALRRYTSSWRYLKSVKAGAQRVDLDGQPCGELEQEHIDHAQAMLKESQEKAKAKRAAQTPKAAPAGKAPAKKAPKKVAVPARKTERPAKAAPKVEPVVNLVQAQLTDLAKKQRVNVKLGMTPVAGVITDINKEDIHVQLDSGLTIKVKAEHILL</sequence>
<proteinExistence type="inferred from homology"/>
<name>PROQ_SHEON</name>
<accession>Q8EDY8</accession>
<keyword id="KW-0143">Chaperone</keyword>
<keyword id="KW-0963">Cytoplasm</keyword>
<keyword id="KW-1185">Reference proteome</keyword>
<keyword id="KW-0694">RNA-binding</keyword>
<dbReference type="EMBL" id="AE014299">
    <property type="protein sequence ID" value="AAN55632.1"/>
    <property type="molecule type" value="Genomic_DNA"/>
</dbReference>
<dbReference type="RefSeq" id="NP_718188.1">
    <property type="nucleotide sequence ID" value="NC_004347.2"/>
</dbReference>
<dbReference type="RefSeq" id="WP_011072551.1">
    <property type="nucleotide sequence ID" value="NC_004347.2"/>
</dbReference>
<dbReference type="SMR" id="Q8EDY8"/>
<dbReference type="STRING" id="211586.SO_2602"/>
<dbReference type="PaxDb" id="211586-SO_2602"/>
<dbReference type="KEGG" id="son:SO_2602"/>
<dbReference type="PATRIC" id="fig|211586.12.peg.2504"/>
<dbReference type="eggNOG" id="COG3109">
    <property type="taxonomic scope" value="Bacteria"/>
</dbReference>
<dbReference type="HOGENOM" id="CLU_113254_0_0_6"/>
<dbReference type="OrthoDB" id="8421419at2"/>
<dbReference type="PhylomeDB" id="Q8EDY8"/>
<dbReference type="BioCyc" id="SONE211586:G1GMP-2386-MONOMER"/>
<dbReference type="Proteomes" id="UP000008186">
    <property type="component" value="Chromosome"/>
</dbReference>
<dbReference type="GO" id="GO:0005829">
    <property type="term" value="C:cytosol"/>
    <property type="evidence" value="ECO:0000318"/>
    <property type="project" value="GO_Central"/>
</dbReference>
<dbReference type="GO" id="GO:0033592">
    <property type="term" value="F:RNA strand annealing activity"/>
    <property type="evidence" value="ECO:0000318"/>
    <property type="project" value="GO_Central"/>
</dbReference>
<dbReference type="GO" id="GO:0034057">
    <property type="term" value="F:RNA strand-exchange activity"/>
    <property type="evidence" value="ECO:0000318"/>
    <property type="project" value="GO_Central"/>
</dbReference>
<dbReference type="GO" id="GO:0010608">
    <property type="term" value="P:post-transcriptional regulation of gene expression"/>
    <property type="evidence" value="ECO:0000318"/>
    <property type="project" value="GO_Central"/>
</dbReference>
<dbReference type="FunFam" id="1.10.1710.10:FF:000001">
    <property type="entry name" value="RNA chaperone ProQ"/>
    <property type="match status" value="1"/>
</dbReference>
<dbReference type="Gene3D" id="1.10.1710.10">
    <property type="entry name" value="ProQ/FinO domain"/>
    <property type="match status" value="1"/>
</dbReference>
<dbReference type="HAMAP" id="MF_00749">
    <property type="entry name" value="ProQ"/>
    <property type="match status" value="1"/>
</dbReference>
<dbReference type="InterPro" id="IPR023529">
    <property type="entry name" value="ProQ"/>
</dbReference>
<dbReference type="InterPro" id="IPR016103">
    <property type="entry name" value="ProQ/FinO"/>
</dbReference>
<dbReference type="InterPro" id="IPR036442">
    <property type="entry name" value="ProQ/FinO_sf"/>
</dbReference>
<dbReference type="InterPro" id="IPR035236">
    <property type="entry name" value="ProQ_C"/>
</dbReference>
<dbReference type="NCBIfam" id="NF003434">
    <property type="entry name" value="PRK04950.1"/>
    <property type="match status" value="1"/>
</dbReference>
<dbReference type="PANTHER" id="PTHR38106">
    <property type="entry name" value="RNA CHAPERONE PROQ"/>
    <property type="match status" value="1"/>
</dbReference>
<dbReference type="PANTHER" id="PTHR38106:SF1">
    <property type="entry name" value="RNA CHAPERONE PROQ"/>
    <property type="match status" value="1"/>
</dbReference>
<dbReference type="Pfam" id="PF04352">
    <property type="entry name" value="ProQ"/>
    <property type="match status" value="1"/>
</dbReference>
<dbReference type="Pfam" id="PF17516">
    <property type="entry name" value="ProQ_C"/>
    <property type="match status" value="1"/>
</dbReference>
<dbReference type="SMART" id="SM00945">
    <property type="entry name" value="ProQ"/>
    <property type="match status" value="1"/>
</dbReference>
<dbReference type="SUPFAM" id="SSF48657">
    <property type="entry name" value="FinO-like"/>
    <property type="match status" value="1"/>
</dbReference>
<comment type="function">
    <text evidence="1">RNA chaperone with significant RNA binding, RNA strand exchange and RNA duplexing activities.</text>
</comment>
<comment type="subcellular location">
    <subcellularLocation>
        <location evidence="1">Cytoplasm</location>
    </subcellularLocation>
</comment>
<comment type="similarity">
    <text evidence="1">Belongs to the ProQ family.</text>
</comment>
<feature type="chain" id="PRO_0000214623" description="RNA chaperone ProQ">
    <location>
        <begin position="1"/>
        <end position="213"/>
    </location>
</feature>
<feature type="region of interest" description="Disordered" evidence="2">
    <location>
        <begin position="105"/>
        <end position="150"/>
    </location>
</feature>
<feature type="compositionally biased region" description="Low complexity" evidence="2">
    <location>
        <begin position="115"/>
        <end position="127"/>
    </location>
</feature>
<protein>
    <recommendedName>
        <fullName evidence="1">RNA chaperone ProQ</fullName>
    </recommendedName>
</protein>
<evidence type="ECO:0000255" key="1">
    <source>
        <dbReference type="HAMAP-Rule" id="MF_00749"/>
    </source>
</evidence>
<evidence type="ECO:0000256" key="2">
    <source>
        <dbReference type="SAM" id="MobiDB-lite"/>
    </source>
</evidence>
<organism>
    <name type="scientific">Shewanella oneidensis (strain ATCC 700550 / JCM 31522 / CIP 106686 / LMG 19005 / NCIMB 14063 / MR-1)</name>
    <dbReference type="NCBI Taxonomy" id="211586"/>
    <lineage>
        <taxon>Bacteria</taxon>
        <taxon>Pseudomonadati</taxon>
        <taxon>Pseudomonadota</taxon>
        <taxon>Gammaproteobacteria</taxon>
        <taxon>Alteromonadales</taxon>
        <taxon>Shewanellaceae</taxon>
        <taxon>Shewanella</taxon>
    </lineage>
</organism>